<keyword id="KW-0021">Allosteric enzyme</keyword>
<keyword id="KW-0328">Glycosyltransferase</keyword>
<keyword id="KW-0342">GTP-binding</keyword>
<keyword id="KW-0460">Magnesium</keyword>
<keyword id="KW-0547">Nucleotide-binding</keyword>
<keyword id="KW-0808">Transferase</keyword>
<sequence length="209" mass="22965">MSKVIEVNHPLVLHKLSMVRSKDTGSKDFKELVKEISMLLTYEATRDINMDEVEIETPVCKTKCRVVSGKKMAIVPILRAGLGMVDGVLSLIPAAKIGHIGLYRDEETLQPVEYFCKLPKDIEERDVIVVDPMLATGGSAADALTMLKEKGAKNLKLMCLISAPEGIKLVQEKHPDVDIYVASIDEKLNEKGYIVPGLGDAGDRLYGTK</sequence>
<accession>B2UZI9</accession>
<protein>
    <recommendedName>
        <fullName evidence="1">Uracil phosphoribosyltransferase</fullName>
        <ecNumber evidence="1">2.4.2.9</ecNumber>
    </recommendedName>
    <alternativeName>
        <fullName evidence="1">UMP pyrophosphorylase</fullName>
    </alternativeName>
    <alternativeName>
        <fullName evidence="1">UPRTase</fullName>
    </alternativeName>
</protein>
<organism>
    <name type="scientific">Clostridium botulinum (strain Alaska E43 / Type E3)</name>
    <dbReference type="NCBI Taxonomy" id="508767"/>
    <lineage>
        <taxon>Bacteria</taxon>
        <taxon>Bacillati</taxon>
        <taxon>Bacillota</taxon>
        <taxon>Clostridia</taxon>
        <taxon>Eubacteriales</taxon>
        <taxon>Clostridiaceae</taxon>
        <taxon>Clostridium</taxon>
    </lineage>
</organism>
<name>UPP_CLOBA</name>
<gene>
    <name evidence="1" type="primary">upp</name>
    <name type="ordered locus">CLH_0479</name>
</gene>
<comment type="function">
    <text evidence="1">Catalyzes the conversion of uracil and 5-phospho-alpha-D-ribose 1-diphosphate (PRPP) to UMP and diphosphate.</text>
</comment>
<comment type="catalytic activity">
    <reaction evidence="1">
        <text>UMP + diphosphate = 5-phospho-alpha-D-ribose 1-diphosphate + uracil</text>
        <dbReference type="Rhea" id="RHEA:13017"/>
        <dbReference type="ChEBI" id="CHEBI:17568"/>
        <dbReference type="ChEBI" id="CHEBI:33019"/>
        <dbReference type="ChEBI" id="CHEBI:57865"/>
        <dbReference type="ChEBI" id="CHEBI:58017"/>
        <dbReference type="EC" id="2.4.2.9"/>
    </reaction>
</comment>
<comment type="cofactor">
    <cofactor evidence="1">
        <name>Mg(2+)</name>
        <dbReference type="ChEBI" id="CHEBI:18420"/>
    </cofactor>
    <text evidence="1">Binds 1 Mg(2+) ion per subunit. The magnesium is bound as Mg-PRPP.</text>
</comment>
<comment type="activity regulation">
    <text evidence="1">Allosterically activated by GTP.</text>
</comment>
<comment type="pathway">
    <text evidence="1">Pyrimidine metabolism; UMP biosynthesis via salvage pathway; UMP from uracil: step 1/1.</text>
</comment>
<comment type="similarity">
    <text evidence="1">Belongs to the UPRTase family.</text>
</comment>
<feature type="chain" id="PRO_1000139107" description="Uracil phosphoribosyltransferase">
    <location>
        <begin position="1"/>
        <end position="209"/>
    </location>
</feature>
<feature type="binding site" evidence="1">
    <location>
        <position position="79"/>
    </location>
    <ligand>
        <name>5-phospho-alpha-D-ribose 1-diphosphate</name>
        <dbReference type="ChEBI" id="CHEBI:58017"/>
    </ligand>
</feature>
<feature type="binding site" evidence="1">
    <location>
        <position position="104"/>
    </location>
    <ligand>
        <name>5-phospho-alpha-D-ribose 1-diphosphate</name>
        <dbReference type="ChEBI" id="CHEBI:58017"/>
    </ligand>
</feature>
<feature type="binding site" evidence="1">
    <location>
        <begin position="131"/>
        <end position="139"/>
    </location>
    <ligand>
        <name>5-phospho-alpha-D-ribose 1-diphosphate</name>
        <dbReference type="ChEBI" id="CHEBI:58017"/>
    </ligand>
</feature>
<feature type="binding site" evidence="1">
    <location>
        <position position="194"/>
    </location>
    <ligand>
        <name>uracil</name>
        <dbReference type="ChEBI" id="CHEBI:17568"/>
    </ligand>
</feature>
<feature type="binding site" evidence="1">
    <location>
        <begin position="199"/>
        <end position="201"/>
    </location>
    <ligand>
        <name>uracil</name>
        <dbReference type="ChEBI" id="CHEBI:17568"/>
    </ligand>
</feature>
<feature type="binding site" evidence="1">
    <location>
        <position position="200"/>
    </location>
    <ligand>
        <name>5-phospho-alpha-D-ribose 1-diphosphate</name>
        <dbReference type="ChEBI" id="CHEBI:58017"/>
    </ligand>
</feature>
<evidence type="ECO:0000255" key="1">
    <source>
        <dbReference type="HAMAP-Rule" id="MF_01218"/>
    </source>
</evidence>
<proteinExistence type="inferred from homology"/>
<dbReference type="EC" id="2.4.2.9" evidence="1"/>
<dbReference type="EMBL" id="CP001078">
    <property type="protein sequence ID" value="ACD52793.1"/>
    <property type="molecule type" value="Genomic_DNA"/>
</dbReference>
<dbReference type="RefSeq" id="WP_003372223.1">
    <property type="nucleotide sequence ID" value="NC_010723.1"/>
</dbReference>
<dbReference type="SMR" id="B2UZI9"/>
<dbReference type="KEGG" id="cbt:CLH_0479"/>
<dbReference type="HOGENOM" id="CLU_067096_2_2_9"/>
<dbReference type="UniPathway" id="UPA00574">
    <property type="reaction ID" value="UER00636"/>
</dbReference>
<dbReference type="GO" id="GO:0005525">
    <property type="term" value="F:GTP binding"/>
    <property type="evidence" value="ECO:0007669"/>
    <property type="project" value="UniProtKB-KW"/>
</dbReference>
<dbReference type="GO" id="GO:0000287">
    <property type="term" value="F:magnesium ion binding"/>
    <property type="evidence" value="ECO:0007669"/>
    <property type="project" value="UniProtKB-UniRule"/>
</dbReference>
<dbReference type="GO" id="GO:0004845">
    <property type="term" value="F:uracil phosphoribosyltransferase activity"/>
    <property type="evidence" value="ECO:0007669"/>
    <property type="project" value="UniProtKB-UniRule"/>
</dbReference>
<dbReference type="GO" id="GO:0044206">
    <property type="term" value="P:UMP salvage"/>
    <property type="evidence" value="ECO:0007669"/>
    <property type="project" value="UniProtKB-UniRule"/>
</dbReference>
<dbReference type="GO" id="GO:0006223">
    <property type="term" value="P:uracil salvage"/>
    <property type="evidence" value="ECO:0007669"/>
    <property type="project" value="InterPro"/>
</dbReference>
<dbReference type="CDD" id="cd06223">
    <property type="entry name" value="PRTases_typeI"/>
    <property type="match status" value="1"/>
</dbReference>
<dbReference type="FunFam" id="3.40.50.2020:FF:000003">
    <property type="entry name" value="Uracil phosphoribosyltransferase"/>
    <property type="match status" value="1"/>
</dbReference>
<dbReference type="Gene3D" id="3.40.50.2020">
    <property type="match status" value="1"/>
</dbReference>
<dbReference type="HAMAP" id="MF_01218_B">
    <property type="entry name" value="Upp_B"/>
    <property type="match status" value="1"/>
</dbReference>
<dbReference type="InterPro" id="IPR000836">
    <property type="entry name" value="PRibTrfase_dom"/>
</dbReference>
<dbReference type="InterPro" id="IPR029057">
    <property type="entry name" value="PRTase-like"/>
</dbReference>
<dbReference type="InterPro" id="IPR034332">
    <property type="entry name" value="Upp_B"/>
</dbReference>
<dbReference type="InterPro" id="IPR050054">
    <property type="entry name" value="UPRTase/APRTase"/>
</dbReference>
<dbReference type="InterPro" id="IPR005765">
    <property type="entry name" value="Ura_phspho_trans"/>
</dbReference>
<dbReference type="NCBIfam" id="NF001097">
    <property type="entry name" value="PRK00129.1"/>
    <property type="match status" value="1"/>
</dbReference>
<dbReference type="NCBIfam" id="TIGR01091">
    <property type="entry name" value="upp"/>
    <property type="match status" value="1"/>
</dbReference>
<dbReference type="PANTHER" id="PTHR32315">
    <property type="entry name" value="ADENINE PHOSPHORIBOSYLTRANSFERASE"/>
    <property type="match status" value="1"/>
</dbReference>
<dbReference type="PANTHER" id="PTHR32315:SF4">
    <property type="entry name" value="URACIL PHOSPHORIBOSYLTRANSFERASE, CHLOROPLASTIC"/>
    <property type="match status" value="1"/>
</dbReference>
<dbReference type="Pfam" id="PF14681">
    <property type="entry name" value="UPRTase"/>
    <property type="match status" value="1"/>
</dbReference>
<dbReference type="SUPFAM" id="SSF53271">
    <property type="entry name" value="PRTase-like"/>
    <property type="match status" value="1"/>
</dbReference>
<reference key="1">
    <citation type="submission" date="2008-05" db="EMBL/GenBank/DDBJ databases">
        <title>Complete genome sequence of Clostridium botulinum E3 str. Alaska E43.</title>
        <authorList>
            <person name="Brinkac L.M."/>
            <person name="Brown J.L."/>
            <person name="Bruce D."/>
            <person name="Detter C."/>
            <person name="Munk C."/>
            <person name="Smith L.A."/>
            <person name="Smith T.J."/>
            <person name="Sutton G."/>
            <person name="Brettin T.S."/>
        </authorList>
    </citation>
    <scope>NUCLEOTIDE SEQUENCE [LARGE SCALE GENOMIC DNA]</scope>
    <source>
        <strain>Alaska E43 / Type E3</strain>
    </source>
</reference>